<sequence length="700" mass="77446">MARKTPIERYRNIGISAHIDAGKTTTTERILFYTGVNHKIGEVHDGAATMDWMEQEQERGITITSAATTAFWKGMGNNYPEHRINIIDTPGHVDFTIEVERSMRVLDGACMVYCAVGGVQPQSETVWRQANKYKVPRLAFVNKMDRTGANFFKVYDQLKLRLKANPVPVVVPIGAEENFKGVVDLLKMKAIIWDEASQGTKFDYVDIPAELADTCQEWREKMVEAAAEASEDLMNKYLEEGDLPEADIVKALRDRTIACEIQPMLCGTAFKNKGVQRMLDAVIDFLPSPVDIPPVKGELESGEAAERQASDEEKFSSLAFKIMTDPFVGQLIFFRVYSGVVNSGDTLLNSTKGKKERLGRILQMHANQREEIKEVRAGDIAAAVGLKEATTGDTLCDPAHPIVLERMVFPEPVISQAVEPKTKADQEKMGLALNRLAQEDPSFRVQTDEESGQTIISGMGELHLEILVDRMKREFGVEATVGKPQVAYRETIRSTAKDVDGKFVKQSGGRGQYGHAVITLEPNEQGKGYEFFDEIKGGVIPREYIPAVDKGIQDTLKSGVLAGFPVVDVKVHLTFGSYHDVDSNENAFRMAGSMAFKEAMRRANPVVLEPMMAVEVETPEDYMGNVMGDLSGRRGIVQGMEDMVGGGKIVRAEVPLSEMFGYSTSLRSLTQGRATYTMEFKHYAEAPKNVADAIISAKSK</sequence>
<gene>
    <name evidence="1" type="primary">fusA2</name>
    <name type="ordered locus">BTH_I3071</name>
</gene>
<feature type="chain" id="PRO_0000263436" description="Elongation factor G 2">
    <location>
        <begin position="1"/>
        <end position="700"/>
    </location>
</feature>
<feature type="domain" description="tr-type G">
    <location>
        <begin position="8"/>
        <end position="290"/>
    </location>
</feature>
<feature type="binding site" evidence="1">
    <location>
        <begin position="17"/>
        <end position="24"/>
    </location>
    <ligand>
        <name>GTP</name>
        <dbReference type="ChEBI" id="CHEBI:37565"/>
    </ligand>
</feature>
<feature type="binding site" evidence="1">
    <location>
        <begin position="88"/>
        <end position="92"/>
    </location>
    <ligand>
        <name>GTP</name>
        <dbReference type="ChEBI" id="CHEBI:37565"/>
    </ligand>
</feature>
<feature type="binding site" evidence="1">
    <location>
        <begin position="142"/>
        <end position="145"/>
    </location>
    <ligand>
        <name>GTP</name>
        <dbReference type="ChEBI" id="CHEBI:37565"/>
    </ligand>
</feature>
<organism>
    <name type="scientific">Burkholderia thailandensis (strain ATCC 700388 / DSM 13276 / CCUG 48851 / CIP 106301 / E264)</name>
    <dbReference type="NCBI Taxonomy" id="271848"/>
    <lineage>
        <taxon>Bacteria</taxon>
        <taxon>Pseudomonadati</taxon>
        <taxon>Pseudomonadota</taxon>
        <taxon>Betaproteobacteria</taxon>
        <taxon>Burkholderiales</taxon>
        <taxon>Burkholderiaceae</taxon>
        <taxon>Burkholderia</taxon>
        <taxon>pseudomallei group</taxon>
    </lineage>
</organism>
<evidence type="ECO:0000255" key="1">
    <source>
        <dbReference type="HAMAP-Rule" id="MF_00054"/>
    </source>
</evidence>
<name>EFG2_BURTA</name>
<reference key="1">
    <citation type="journal article" date="2005" name="BMC Genomics">
        <title>Bacterial genome adaptation to niches: divergence of the potential virulence genes in three Burkholderia species of different survival strategies.</title>
        <authorList>
            <person name="Kim H.S."/>
            <person name="Schell M.A."/>
            <person name="Yu Y."/>
            <person name="Ulrich R.L."/>
            <person name="Sarria S.H."/>
            <person name="Nierman W.C."/>
            <person name="DeShazer D."/>
        </authorList>
    </citation>
    <scope>NUCLEOTIDE SEQUENCE [LARGE SCALE GENOMIC DNA]</scope>
    <source>
        <strain>ATCC 700388 / DSM 13276 / CCUG 48851 / CIP 106301 / E264</strain>
    </source>
</reference>
<keyword id="KW-0963">Cytoplasm</keyword>
<keyword id="KW-0251">Elongation factor</keyword>
<keyword id="KW-0342">GTP-binding</keyword>
<keyword id="KW-0547">Nucleotide-binding</keyword>
<keyword id="KW-0648">Protein biosynthesis</keyword>
<comment type="function">
    <text evidence="1">Catalyzes the GTP-dependent ribosomal translocation step during translation elongation. During this step, the ribosome changes from the pre-translocational (PRE) to the post-translocational (POST) state as the newly formed A-site-bound peptidyl-tRNA and P-site-bound deacylated tRNA move to the P and E sites, respectively. Catalyzes the coordinated movement of the two tRNA molecules, the mRNA and conformational changes in the ribosome.</text>
</comment>
<comment type="subcellular location">
    <subcellularLocation>
        <location evidence="1">Cytoplasm</location>
    </subcellularLocation>
</comment>
<comment type="similarity">
    <text evidence="1">Belongs to the TRAFAC class translation factor GTPase superfamily. Classic translation factor GTPase family. EF-G/EF-2 subfamily.</text>
</comment>
<protein>
    <recommendedName>
        <fullName evidence="1">Elongation factor G 2</fullName>
        <shortName evidence="1">EF-G 2</shortName>
    </recommendedName>
</protein>
<accession>Q2SU24</accession>
<proteinExistence type="inferred from homology"/>
<dbReference type="EMBL" id="CP000086">
    <property type="protein sequence ID" value="ABC38805.1"/>
    <property type="molecule type" value="Genomic_DNA"/>
</dbReference>
<dbReference type="SMR" id="Q2SU24"/>
<dbReference type="KEGG" id="bte:BTH_I3071"/>
<dbReference type="HOGENOM" id="CLU_002794_4_1_4"/>
<dbReference type="Proteomes" id="UP000001930">
    <property type="component" value="Chromosome I"/>
</dbReference>
<dbReference type="GO" id="GO:0005737">
    <property type="term" value="C:cytoplasm"/>
    <property type="evidence" value="ECO:0007669"/>
    <property type="project" value="UniProtKB-SubCell"/>
</dbReference>
<dbReference type="GO" id="GO:0005525">
    <property type="term" value="F:GTP binding"/>
    <property type="evidence" value="ECO:0007669"/>
    <property type="project" value="UniProtKB-UniRule"/>
</dbReference>
<dbReference type="GO" id="GO:0003924">
    <property type="term" value="F:GTPase activity"/>
    <property type="evidence" value="ECO:0007669"/>
    <property type="project" value="InterPro"/>
</dbReference>
<dbReference type="GO" id="GO:0097216">
    <property type="term" value="F:guanosine tetraphosphate binding"/>
    <property type="evidence" value="ECO:0007669"/>
    <property type="project" value="UniProtKB-ARBA"/>
</dbReference>
<dbReference type="GO" id="GO:0003746">
    <property type="term" value="F:translation elongation factor activity"/>
    <property type="evidence" value="ECO:0007669"/>
    <property type="project" value="UniProtKB-UniRule"/>
</dbReference>
<dbReference type="GO" id="GO:0032790">
    <property type="term" value="P:ribosome disassembly"/>
    <property type="evidence" value="ECO:0007669"/>
    <property type="project" value="TreeGrafter"/>
</dbReference>
<dbReference type="CDD" id="cd01886">
    <property type="entry name" value="EF-G"/>
    <property type="match status" value="1"/>
</dbReference>
<dbReference type="CDD" id="cd16262">
    <property type="entry name" value="EFG_III"/>
    <property type="match status" value="1"/>
</dbReference>
<dbReference type="CDD" id="cd01434">
    <property type="entry name" value="EFG_mtEFG1_IV"/>
    <property type="match status" value="1"/>
</dbReference>
<dbReference type="CDD" id="cd03713">
    <property type="entry name" value="EFG_mtEFG_C"/>
    <property type="match status" value="1"/>
</dbReference>
<dbReference type="CDD" id="cd04088">
    <property type="entry name" value="EFG_mtEFG_II"/>
    <property type="match status" value="1"/>
</dbReference>
<dbReference type="FunFam" id="2.40.30.10:FF:000006">
    <property type="entry name" value="Elongation factor G"/>
    <property type="match status" value="1"/>
</dbReference>
<dbReference type="FunFam" id="3.30.230.10:FF:000003">
    <property type="entry name" value="Elongation factor G"/>
    <property type="match status" value="1"/>
</dbReference>
<dbReference type="FunFam" id="3.30.70.240:FF:000001">
    <property type="entry name" value="Elongation factor G"/>
    <property type="match status" value="1"/>
</dbReference>
<dbReference type="FunFam" id="3.30.70.870:FF:000001">
    <property type="entry name" value="Elongation factor G"/>
    <property type="match status" value="1"/>
</dbReference>
<dbReference type="FunFam" id="3.40.50.300:FF:000029">
    <property type="entry name" value="Elongation factor G"/>
    <property type="match status" value="1"/>
</dbReference>
<dbReference type="Gene3D" id="3.30.230.10">
    <property type="match status" value="1"/>
</dbReference>
<dbReference type="Gene3D" id="3.30.70.240">
    <property type="match status" value="1"/>
</dbReference>
<dbReference type="Gene3D" id="3.30.70.870">
    <property type="entry name" value="Elongation Factor G (Translational Gtpase), domain 3"/>
    <property type="match status" value="1"/>
</dbReference>
<dbReference type="Gene3D" id="3.40.50.300">
    <property type="entry name" value="P-loop containing nucleotide triphosphate hydrolases"/>
    <property type="match status" value="1"/>
</dbReference>
<dbReference type="Gene3D" id="2.40.30.10">
    <property type="entry name" value="Translation factors"/>
    <property type="match status" value="1"/>
</dbReference>
<dbReference type="HAMAP" id="MF_00054_B">
    <property type="entry name" value="EF_G_EF_2_B"/>
    <property type="match status" value="1"/>
</dbReference>
<dbReference type="InterPro" id="IPR041095">
    <property type="entry name" value="EFG_II"/>
</dbReference>
<dbReference type="InterPro" id="IPR009022">
    <property type="entry name" value="EFG_III"/>
</dbReference>
<dbReference type="InterPro" id="IPR035647">
    <property type="entry name" value="EFG_III/V"/>
</dbReference>
<dbReference type="InterPro" id="IPR047872">
    <property type="entry name" value="EFG_IV"/>
</dbReference>
<dbReference type="InterPro" id="IPR035649">
    <property type="entry name" value="EFG_V"/>
</dbReference>
<dbReference type="InterPro" id="IPR000640">
    <property type="entry name" value="EFG_V-like"/>
</dbReference>
<dbReference type="InterPro" id="IPR004161">
    <property type="entry name" value="EFTu-like_2"/>
</dbReference>
<dbReference type="InterPro" id="IPR031157">
    <property type="entry name" value="G_TR_CS"/>
</dbReference>
<dbReference type="InterPro" id="IPR027417">
    <property type="entry name" value="P-loop_NTPase"/>
</dbReference>
<dbReference type="InterPro" id="IPR020568">
    <property type="entry name" value="Ribosomal_Su5_D2-typ_SF"/>
</dbReference>
<dbReference type="InterPro" id="IPR014721">
    <property type="entry name" value="Ribsml_uS5_D2-typ_fold_subgr"/>
</dbReference>
<dbReference type="InterPro" id="IPR005225">
    <property type="entry name" value="Small_GTP-bd"/>
</dbReference>
<dbReference type="InterPro" id="IPR000795">
    <property type="entry name" value="T_Tr_GTP-bd_dom"/>
</dbReference>
<dbReference type="InterPro" id="IPR009000">
    <property type="entry name" value="Transl_B-barrel_sf"/>
</dbReference>
<dbReference type="InterPro" id="IPR004540">
    <property type="entry name" value="Transl_elong_EFG/EF2"/>
</dbReference>
<dbReference type="InterPro" id="IPR005517">
    <property type="entry name" value="Transl_elong_EFG/EF2_IV"/>
</dbReference>
<dbReference type="NCBIfam" id="TIGR00484">
    <property type="entry name" value="EF-G"/>
    <property type="match status" value="1"/>
</dbReference>
<dbReference type="NCBIfam" id="NF009381">
    <property type="entry name" value="PRK12740.1-5"/>
    <property type="match status" value="1"/>
</dbReference>
<dbReference type="NCBIfam" id="TIGR00231">
    <property type="entry name" value="small_GTP"/>
    <property type="match status" value="1"/>
</dbReference>
<dbReference type="PANTHER" id="PTHR43261:SF1">
    <property type="entry name" value="RIBOSOME-RELEASING FACTOR 2, MITOCHONDRIAL"/>
    <property type="match status" value="1"/>
</dbReference>
<dbReference type="PANTHER" id="PTHR43261">
    <property type="entry name" value="TRANSLATION ELONGATION FACTOR G-RELATED"/>
    <property type="match status" value="1"/>
</dbReference>
<dbReference type="Pfam" id="PF00679">
    <property type="entry name" value="EFG_C"/>
    <property type="match status" value="1"/>
</dbReference>
<dbReference type="Pfam" id="PF14492">
    <property type="entry name" value="EFG_III"/>
    <property type="match status" value="1"/>
</dbReference>
<dbReference type="Pfam" id="PF03764">
    <property type="entry name" value="EFG_IV"/>
    <property type="match status" value="1"/>
</dbReference>
<dbReference type="Pfam" id="PF00009">
    <property type="entry name" value="GTP_EFTU"/>
    <property type="match status" value="1"/>
</dbReference>
<dbReference type="Pfam" id="PF03144">
    <property type="entry name" value="GTP_EFTU_D2"/>
    <property type="match status" value="1"/>
</dbReference>
<dbReference type="PRINTS" id="PR00315">
    <property type="entry name" value="ELONGATNFCT"/>
</dbReference>
<dbReference type="SMART" id="SM00838">
    <property type="entry name" value="EFG_C"/>
    <property type="match status" value="1"/>
</dbReference>
<dbReference type="SMART" id="SM00889">
    <property type="entry name" value="EFG_IV"/>
    <property type="match status" value="1"/>
</dbReference>
<dbReference type="SUPFAM" id="SSF54980">
    <property type="entry name" value="EF-G C-terminal domain-like"/>
    <property type="match status" value="2"/>
</dbReference>
<dbReference type="SUPFAM" id="SSF52540">
    <property type="entry name" value="P-loop containing nucleoside triphosphate hydrolases"/>
    <property type="match status" value="1"/>
</dbReference>
<dbReference type="SUPFAM" id="SSF54211">
    <property type="entry name" value="Ribosomal protein S5 domain 2-like"/>
    <property type="match status" value="1"/>
</dbReference>
<dbReference type="SUPFAM" id="SSF50447">
    <property type="entry name" value="Translation proteins"/>
    <property type="match status" value="1"/>
</dbReference>
<dbReference type="PROSITE" id="PS00301">
    <property type="entry name" value="G_TR_1"/>
    <property type="match status" value="1"/>
</dbReference>
<dbReference type="PROSITE" id="PS51722">
    <property type="entry name" value="G_TR_2"/>
    <property type="match status" value="1"/>
</dbReference>